<organism>
    <name type="scientific">Escherichia coli (strain K12)</name>
    <dbReference type="NCBI Taxonomy" id="83333"/>
    <lineage>
        <taxon>Bacteria</taxon>
        <taxon>Pseudomonadati</taxon>
        <taxon>Pseudomonadota</taxon>
        <taxon>Gammaproteobacteria</taxon>
        <taxon>Enterobacterales</taxon>
        <taxon>Enterobacteriaceae</taxon>
        <taxon>Escherichia</taxon>
    </lineage>
</organism>
<proteinExistence type="evidence at protein level"/>
<name>GYRA_ECOLI</name>
<evidence type="ECO:0000255" key="1">
    <source>
        <dbReference type="HAMAP-Rule" id="MF_01897"/>
    </source>
</evidence>
<evidence type="ECO:0000255" key="2">
    <source>
        <dbReference type="PROSITE-ProRule" id="PRU01384"/>
    </source>
</evidence>
<evidence type="ECO:0000256" key="3">
    <source>
        <dbReference type="SAM" id="MobiDB-lite"/>
    </source>
</evidence>
<evidence type="ECO:0000269" key="4">
    <source>
    </source>
</evidence>
<evidence type="ECO:0000269" key="5">
    <source>
    </source>
</evidence>
<evidence type="ECO:0000269" key="6">
    <source>
    </source>
</evidence>
<evidence type="ECO:0000269" key="7">
    <source>
    </source>
</evidence>
<evidence type="ECO:0000269" key="8">
    <source>
    </source>
</evidence>
<evidence type="ECO:0000269" key="9">
    <source>
    </source>
</evidence>
<evidence type="ECO:0000269" key="10">
    <source>
    </source>
</evidence>
<evidence type="ECO:0000269" key="11">
    <source>
    </source>
</evidence>
<evidence type="ECO:0000269" key="12">
    <source>
    </source>
</evidence>
<evidence type="ECO:0000269" key="13">
    <source>
    </source>
</evidence>
<evidence type="ECO:0000269" key="14">
    <source>
    </source>
</evidence>
<evidence type="ECO:0000269" key="15">
    <source>
    </source>
</evidence>
<evidence type="ECO:0000269" key="16">
    <source>
    </source>
</evidence>
<evidence type="ECO:0000269" key="17">
    <source>
    </source>
</evidence>
<evidence type="ECO:0000269" key="18">
    <source>
    </source>
</evidence>
<evidence type="ECO:0000269" key="19">
    <source>
    </source>
</evidence>
<evidence type="ECO:0000269" key="20">
    <source>
    </source>
</evidence>
<evidence type="ECO:0000269" key="21">
    <source>
    </source>
</evidence>
<evidence type="ECO:0000269" key="22">
    <source>
    </source>
</evidence>
<evidence type="ECO:0000269" key="23">
    <source>
    </source>
</evidence>
<evidence type="ECO:0000269" key="24">
    <source>
    </source>
</evidence>
<evidence type="ECO:0000269" key="25">
    <source>
    </source>
</evidence>
<evidence type="ECO:0000269" key="26">
    <source>
    </source>
</evidence>
<evidence type="ECO:0000269" key="27">
    <source>
    </source>
</evidence>
<evidence type="ECO:0000269" key="28">
    <source>
    </source>
</evidence>
<evidence type="ECO:0000269" key="29">
    <source>
    </source>
</evidence>
<evidence type="ECO:0000269" key="30">
    <source>
    </source>
</evidence>
<evidence type="ECO:0000269" key="31">
    <source>
    </source>
</evidence>
<evidence type="ECO:0000269" key="32">
    <source>
    </source>
</evidence>
<evidence type="ECO:0000303" key="33">
    <source>
    </source>
</evidence>
<evidence type="ECO:0000303" key="34">
    <source>
    </source>
</evidence>
<evidence type="ECO:0000303" key="35">
    <source>
    </source>
</evidence>
<evidence type="ECO:0000303" key="36">
    <source>
    </source>
</evidence>
<evidence type="ECO:0000305" key="37">
    <source>
    </source>
</evidence>
<evidence type="ECO:0000305" key="38">
    <source>
    </source>
</evidence>
<evidence type="ECO:0007829" key="39">
    <source>
        <dbReference type="PDB" id="1AB4"/>
    </source>
</evidence>
<evidence type="ECO:0007829" key="40">
    <source>
        <dbReference type="PDB" id="1X75"/>
    </source>
</evidence>
<evidence type="ECO:0007829" key="41">
    <source>
        <dbReference type="PDB" id="1ZI0"/>
    </source>
</evidence>
<evidence type="ECO:0007829" key="42">
    <source>
        <dbReference type="PDB" id="7Z9C"/>
    </source>
</evidence>
<evidence type="ECO:0007829" key="43">
    <source>
        <dbReference type="PDB" id="7Z9G"/>
    </source>
</evidence>
<evidence type="ECO:0007829" key="44">
    <source>
        <dbReference type="PDB" id="8QDX"/>
    </source>
</evidence>
<evidence type="ECO:0007829" key="45">
    <source>
        <dbReference type="PDB" id="8QQI"/>
    </source>
</evidence>
<evidence type="ECO:0007829" key="46">
    <source>
        <dbReference type="PDB" id="9GGQ"/>
    </source>
</evidence>
<protein>
    <recommendedName>
        <fullName evidence="1">DNA gyrase subunit A</fullName>
        <ecNumber evidence="1 4 12 13 15 31">5.6.2.2</ecNumber>
    </recommendedName>
</protein>
<dbReference type="EC" id="5.6.2.2" evidence="1 4 12 13 15 31"/>
<dbReference type="EMBL" id="X06373">
    <property type="protein sequence ID" value="CAA29676.1"/>
    <property type="molecule type" value="Genomic_DNA"/>
</dbReference>
<dbReference type="EMBL" id="X06744">
    <property type="protein sequence ID" value="CAA29919.1"/>
    <property type="molecule type" value="Genomic_DNA"/>
</dbReference>
<dbReference type="EMBL" id="M15631">
    <property type="protein sequence ID" value="AAA23948.1"/>
    <property type="molecule type" value="Genomic_DNA"/>
</dbReference>
<dbReference type="EMBL" id="U00096">
    <property type="protein sequence ID" value="AAC75291.1"/>
    <property type="molecule type" value="Genomic_DNA"/>
</dbReference>
<dbReference type="EMBL" id="AP009048">
    <property type="protein sequence ID" value="BAA16048.1"/>
    <property type="molecule type" value="Genomic_DNA"/>
</dbReference>
<dbReference type="EMBL" id="Y00544">
    <property type="protein sequence ID" value="CAA68611.1"/>
    <property type="molecule type" value="Genomic_DNA"/>
</dbReference>
<dbReference type="PIR" id="S02340">
    <property type="entry name" value="ITECAP"/>
</dbReference>
<dbReference type="RefSeq" id="NP_416734.1">
    <property type="nucleotide sequence ID" value="NC_000913.3"/>
</dbReference>
<dbReference type="RefSeq" id="WP_001281242.1">
    <property type="nucleotide sequence ID" value="NZ_LN832404.1"/>
</dbReference>
<dbReference type="PDB" id="1AB4">
    <property type="method" value="X-ray"/>
    <property type="resolution" value="2.80 A"/>
    <property type="chains" value="A=30-522"/>
</dbReference>
<dbReference type="PDB" id="1X75">
    <property type="method" value="X-ray"/>
    <property type="resolution" value="2.80 A"/>
    <property type="chains" value="A/B=363-494"/>
</dbReference>
<dbReference type="PDB" id="1ZI0">
    <property type="method" value="X-ray"/>
    <property type="resolution" value="2.60 A"/>
    <property type="chains" value="A/B=535-841"/>
</dbReference>
<dbReference type="PDB" id="2Y3P">
    <property type="method" value="X-ray"/>
    <property type="resolution" value="2.62 A"/>
    <property type="chains" value="A/B=2-523"/>
</dbReference>
<dbReference type="PDB" id="3NUH">
    <property type="method" value="X-ray"/>
    <property type="resolution" value="3.10 A"/>
    <property type="chains" value="A=1-525"/>
</dbReference>
<dbReference type="PDB" id="4ELY">
    <property type="method" value="X-ray"/>
    <property type="resolution" value="1.93 A"/>
    <property type="chains" value="A/B=363-497"/>
</dbReference>
<dbReference type="PDB" id="6RKS">
    <property type="method" value="EM"/>
    <property type="resolution" value="4.00 A"/>
    <property type="chains" value="A/C=1-875"/>
</dbReference>
<dbReference type="PDB" id="6RKU">
    <property type="method" value="EM"/>
    <property type="resolution" value="4.00 A"/>
    <property type="chains" value="A/C=1-875"/>
</dbReference>
<dbReference type="PDB" id="6RKV">
    <property type="method" value="EM"/>
    <property type="resolution" value="4.60 A"/>
    <property type="chains" value="A/C=1-875"/>
</dbReference>
<dbReference type="PDB" id="6RKW">
    <property type="method" value="EM"/>
    <property type="resolution" value="6.60 A"/>
    <property type="chains" value="A/C=1-875"/>
</dbReference>
<dbReference type="PDB" id="7Z9C">
    <property type="method" value="EM"/>
    <property type="resolution" value="3.06 A"/>
    <property type="chains" value="A/C=2-875"/>
</dbReference>
<dbReference type="PDB" id="7Z9G">
    <property type="method" value="EM"/>
    <property type="resolution" value="3.25 A"/>
    <property type="chains" value="A/C=2-875"/>
</dbReference>
<dbReference type="PDB" id="7Z9K">
    <property type="method" value="EM"/>
    <property type="resolution" value="3.25 A"/>
    <property type="chains" value="A/C=2-875"/>
</dbReference>
<dbReference type="PDB" id="7Z9M">
    <property type="method" value="EM"/>
    <property type="resolution" value="3.30 A"/>
    <property type="chains" value="A/C=2-875"/>
</dbReference>
<dbReference type="PDB" id="8QDX">
    <property type="method" value="EM"/>
    <property type="resolution" value="3.00 A"/>
    <property type="chains" value="A/C=1-875"/>
</dbReference>
<dbReference type="PDB" id="8QQI">
    <property type="method" value="EM"/>
    <property type="resolution" value="2.90 A"/>
    <property type="chains" value="A/C=2-524"/>
</dbReference>
<dbReference type="PDB" id="8QQS">
    <property type="method" value="EM"/>
    <property type="resolution" value="2.90 A"/>
    <property type="chains" value="A/C=1-875"/>
</dbReference>
<dbReference type="PDB" id="8QQU">
    <property type="method" value="EM"/>
    <property type="resolution" value="2.90 A"/>
    <property type="chains" value="C=1-875"/>
</dbReference>
<dbReference type="PDB" id="9GBV">
    <property type="method" value="EM"/>
    <property type="resolution" value="2.32 A"/>
    <property type="chains" value="A/C=2-875"/>
</dbReference>
<dbReference type="PDB" id="9GGQ">
    <property type="method" value="EM"/>
    <property type="resolution" value="2.60 A"/>
    <property type="chains" value="A/C=2-875"/>
</dbReference>
<dbReference type="PDBsum" id="1AB4"/>
<dbReference type="PDBsum" id="1X75"/>
<dbReference type="PDBsum" id="1ZI0"/>
<dbReference type="PDBsum" id="2Y3P"/>
<dbReference type="PDBsum" id="3NUH"/>
<dbReference type="PDBsum" id="4ELY"/>
<dbReference type="PDBsum" id="6RKS"/>
<dbReference type="PDBsum" id="6RKU"/>
<dbReference type="PDBsum" id="6RKV"/>
<dbReference type="PDBsum" id="6RKW"/>
<dbReference type="PDBsum" id="7Z9C"/>
<dbReference type="PDBsum" id="7Z9G"/>
<dbReference type="PDBsum" id="7Z9K"/>
<dbReference type="PDBsum" id="7Z9M"/>
<dbReference type="PDBsum" id="8QDX"/>
<dbReference type="PDBsum" id="8QQI"/>
<dbReference type="PDBsum" id="8QQS"/>
<dbReference type="PDBsum" id="8QQU"/>
<dbReference type="PDBsum" id="9GBV"/>
<dbReference type="PDBsum" id="9GGQ"/>
<dbReference type="EMDB" id="EMD-14570"/>
<dbReference type="EMDB" id="EMD-14572"/>
<dbReference type="EMDB" id="EMD-14573"/>
<dbReference type="EMDB" id="EMD-14574"/>
<dbReference type="EMDB" id="EMD-18342"/>
<dbReference type="EMDB" id="EMD-18603"/>
<dbReference type="EMDB" id="EMD-18605"/>
<dbReference type="EMDB" id="EMD-4909"/>
<dbReference type="EMDB" id="EMD-4910"/>
<dbReference type="EMDB" id="EMD-4912"/>
<dbReference type="EMDB" id="EMD-4913"/>
<dbReference type="EMDB" id="EMD-51218"/>
<dbReference type="EMDB" id="EMD-51222"/>
<dbReference type="EMDB" id="EMD-51339"/>
<dbReference type="SMR" id="P0AES4"/>
<dbReference type="BioGRID" id="4262132">
    <property type="interactions" value="308"/>
</dbReference>
<dbReference type="BioGRID" id="850960">
    <property type="interactions" value="1"/>
</dbReference>
<dbReference type="ComplexPortal" id="CPX-2177">
    <property type="entry name" value="GyrA-GyrB DNA Gyrase complex"/>
</dbReference>
<dbReference type="ComplexPortal" id="CPX-5906">
    <property type="entry name" value="CcdB-poisoned gyrase complex"/>
</dbReference>
<dbReference type="DIP" id="DIP-36179N"/>
<dbReference type="FunCoup" id="P0AES4">
    <property type="interactions" value="567"/>
</dbReference>
<dbReference type="IntAct" id="P0AES4">
    <property type="interactions" value="55"/>
</dbReference>
<dbReference type="MINT" id="P0AES4"/>
<dbReference type="STRING" id="511145.b2231"/>
<dbReference type="BindingDB" id="P0AES4"/>
<dbReference type="ChEMBL" id="CHEMBL1858"/>
<dbReference type="DrugBank" id="DB00537">
    <property type="generic name" value="Ciprofloxacin"/>
</dbReference>
<dbReference type="DrugBank" id="DB11943">
    <property type="generic name" value="Delafloxacin"/>
</dbReference>
<dbReference type="DrugCentral" id="P0AES4"/>
<dbReference type="jPOST" id="P0AES4"/>
<dbReference type="PaxDb" id="511145-b2231"/>
<dbReference type="EnsemblBacteria" id="AAC75291">
    <property type="protein sequence ID" value="AAC75291"/>
    <property type="gene ID" value="b2231"/>
</dbReference>
<dbReference type="GeneID" id="75206476"/>
<dbReference type="GeneID" id="946614"/>
<dbReference type="KEGG" id="ecj:JW2225"/>
<dbReference type="KEGG" id="eco:b2231"/>
<dbReference type="KEGG" id="ecoc:C3026_12465"/>
<dbReference type="PATRIC" id="fig|1411691.4.peg.4"/>
<dbReference type="EchoBASE" id="EB0418"/>
<dbReference type="eggNOG" id="COG0188">
    <property type="taxonomic scope" value="Bacteria"/>
</dbReference>
<dbReference type="HOGENOM" id="CLU_002977_6_1_6"/>
<dbReference type="InParanoid" id="P0AES4"/>
<dbReference type="OMA" id="THHWLLF"/>
<dbReference type="OrthoDB" id="9806486at2"/>
<dbReference type="PhylomeDB" id="P0AES4"/>
<dbReference type="BioCyc" id="EcoCyc:EG10423-MONOMER"/>
<dbReference type="BioCyc" id="MetaCyc:EG10423-MONOMER"/>
<dbReference type="EvolutionaryTrace" id="P0AES4"/>
<dbReference type="PRO" id="PR:P0AES4"/>
<dbReference type="Proteomes" id="UP000000625">
    <property type="component" value="Chromosome"/>
</dbReference>
<dbReference type="GO" id="GO:0005694">
    <property type="term" value="C:chromosome"/>
    <property type="evidence" value="ECO:0007669"/>
    <property type="project" value="InterPro"/>
</dbReference>
<dbReference type="GO" id="GO:0005737">
    <property type="term" value="C:cytoplasm"/>
    <property type="evidence" value="ECO:0000314"/>
    <property type="project" value="EcoliWiki"/>
</dbReference>
<dbReference type="GO" id="GO:0005829">
    <property type="term" value="C:cytosol"/>
    <property type="evidence" value="ECO:0000314"/>
    <property type="project" value="EcoCyc"/>
</dbReference>
<dbReference type="GO" id="GO:0009330">
    <property type="term" value="C:DNA topoisomerase type II (double strand cut, ATP-hydrolyzing) complex"/>
    <property type="evidence" value="ECO:0000318"/>
    <property type="project" value="GO_Central"/>
</dbReference>
<dbReference type="GO" id="GO:0016020">
    <property type="term" value="C:membrane"/>
    <property type="evidence" value="ECO:0007005"/>
    <property type="project" value="UniProtKB"/>
</dbReference>
<dbReference type="GO" id="GO:0005524">
    <property type="term" value="F:ATP binding"/>
    <property type="evidence" value="ECO:0000318"/>
    <property type="project" value="GO_Central"/>
</dbReference>
<dbReference type="GO" id="GO:0008094">
    <property type="term" value="F:ATP-dependent activity, acting on DNA"/>
    <property type="evidence" value="ECO:0000314"/>
    <property type="project" value="EcoliWiki"/>
</dbReference>
<dbReference type="GO" id="GO:0003677">
    <property type="term" value="F:DNA binding"/>
    <property type="evidence" value="ECO:0000314"/>
    <property type="project" value="EcoliWiki"/>
</dbReference>
<dbReference type="GO" id="GO:0034335">
    <property type="term" value="F:DNA negative supercoiling activity"/>
    <property type="evidence" value="ECO:0000314"/>
    <property type="project" value="UniProtKB"/>
</dbReference>
<dbReference type="GO" id="GO:0003918">
    <property type="term" value="F:DNA topoisomerase type II (double strand cut, ATP-hydrolyzing) activity"/>
    <property type="evidence" value="ECO:0000314"/>
    <property type="project" value="CACAO"/>
</dbReference>
<dbReference type="GO" id="GO:0042802">
    <property type="term" value="F:identical protein binding"/>
    <property type="evidence" value="ECO:0000353"/>
    <property type="project" value="IntAct"/>
</dbReference>
<dbReference type="GO" id="GO:0006265">
    <property type="term" value="P:DNA topological change"/>
    <property type="evidence" value="ECO:0000315"/>
    <property type="project" value="EcoliWiki"/>
</dbReference>
<dbReference type="GO" id="GO:0006261">
    <property type="term" value="P:DNA-templated DNA replication"/>
    <property type="evidence" value="ECO:0007669"/>
    <property type="project" value="UniProtKB-UniRule"/>
</dbReference>
<dbReference type="GO" id="GO:0006351">
    <property type="term" value="P:DNA-templated transcription"/>
    <property type="evidence" value="ECO:0000314"/>
    <property type="project" value="EcoliWiki"/>
</dbReference>
<dbReference type="GO" id="GO:2000104">
    <property type="term" value="P:negative regulation of DNA-templated DNA replication"/>
    <property type="evidence" value="ECO:0000314"/>
    <property type="project" value="ComplexPortal"/>
</dbReference>
<dbReference type="GO" id="GO:0046677">
    <property type="term" value="P:response to antibiotic"/>
    <property type="evidence" value="ECO:0007669"/>
    <property type="project" value="UniProtKB-KW"/>
</dbReference>
<dbReference type="GO" id="GO:0009410">
    <property type="term" value="P:response to xenobiotic stimulus"/>
    <property type="evidence" value="ECO:0000315"/>
    <property type="project" value="EcoliWiki"/>
</dbReference>
<dbReference type="CDD" id="cd00187">
    <property type="entry name" value="TOP4c"/>
    <property type="match status" value="1"/>
</dbReference>
<dbReference type="FunFam" id="2.120.10.90:FF:000002">
    <property type="entry name" value="DNA gyrase subunit A"/>
    <property type="match status" value="1"/>
</dbReference>
<dbReference type="FunFam" id="3.30.1360.40:FF:000002">
    <property type="entry name" value="DNA gyrase subunit A"/>
    <property type="match status" value="1"/>
</dbReference>
<dbReference type="FunFam" id="3.90.199.10:FF:000001">
    <property type="entry name" value="DNA gyrase subunit A"/>
    <property type="match status" value="1"/>
</dbReference>
<dbReference type="Gene3D" id="3.30.1360.40">
    <property type="match status" value="1"/>
</dbReference>
<dbReference type="Gene3D" id="2.120.10.90">
    <property type="entry name" value="DNA gyrase/topoisomerase IV, subunit A, C-terminal"/>
    <property type="match status" value="1"/>
</dbReference>
<dbReference type="Gene3D" id="3.90.199.10">
    <property type="entry name" value="Topoisomerase II, domain 5"/>
    <property type="match status" value="1"/>
</dbReference>
<dbReference type="Gene3D" id="1.10.268.10">
    <property type="entry name" value="Topoisomerase, domain 3"/>
    <property type="match status" value="1"/>
</dbReference>
<dbReference type="HAMAP" id="MF_01897">
    <property type="entry name" value="GyrA"/>
    <property type="match status" value="1"/>
</dbReference>
<dbReference type="InterPro" id="IPR005743">
    <property type="entry name" value="GyrA"/>
</dbReference>
<dbReference type="InterPro" id="IPR006691">
    <property type="entry name" value="GyrA/parC_rep"/>
</dbReference>
<dbReference type="InterPro" id="IPR035516">
    <property type="entry name" value="Gyrase/topoIV_suA_C"/>
</dbReference>
<dbReference type="InterPro" id="IPR013760">
    <property type="entry name" value="Topo_IIA-like_dom_sf"/>
</dbReference>
<dbReference type="InterPro" id="IPR013758">
    <property type="entry name" value="Topo_IIA_A/C_ab"/>
</dbReference>
<dbReference type="InterPro" id="IPR013757">
    <property type="entry name" value="Topo_IIA_A_a_sf"/>
</dbReference>
<dbReference type="InterPro" id="IPR002205">
    <property type="entry name" value="Topo_IIA_dom_A"/>
</dbReference>
<dbReference type="InterPro" id="IPR050220">
    <property type="entry name" value="Type_II_DNA_Topoisomerases"/>
</dbReference>
<dbReference type="NCBIfam" id="TIGR01063">
    <property type="entry name" value="gyrA"/>
    <property type="match status" value="1"/>
</dbReference>
<dbReference type="NCBIfam" id="NF004043">
    <property type="entry name" value="PRK05560.1"/>
    <property type="match status" value="1"/>
</dbReference>
<dbReference type="NCBIfam" id="NF004044">
    <property type="entry name" value="PRK05561.1"/>
    <property type="match status" value="1"/>
</dbReference>
<dbReference type="PANTHER" id="PTHR43493:SF5">
    <property type="entry name" value="DNA GYRASE SUBUNIT A, CHLOROPLASTIC_MITOCHONDRIAL"/>
    <property type="match status" value="1"/>
</dbReference>
<dbReference type="PANTHER" id="PTHR43493">
    <property type="entry name" value="DNA GYRASE/TOPOISOMERASE SUBUNIT A"/>
    <property type="match status" value="1"/>
</dbReference>
<dbReference type="Pfam" id="PF03989">
    <property type="entry name" value="DNA_gyraseA_C"/>
    <property type="match status" value="6"/>
</dbReference>
<dbReference type="Pfam" id="PF00521">
    <property type="entry name" value="DNA_topoisoIV"/>
    <property type="match status" value="1"/>
</dbReference>
<dbReference type="SMART" id="SM00434">
    <property type="entry name" value="TOP4c"/>
    <property type="match status" value="1"/>
</dbReference>
<dbReference type="SUPFAM" id="SSF101904">
    <property type="entry name" value="GyrA/ParC C-terminal domain-like"/>
    <property type="match status" value="1"/>
</dbReference>
<dbReference type="SUPFAM" id="SSF56719">
    <property type="entry name" value="Type II DNA topoisomerase"/>
    <property type="match status" value="1"/>
</dbReference>
<dbReference type="PROSITE" id="PS52040">
    <property type="entry name" value="TOPO_IIA"/>
    <property type="match status" value="1"/>
</dbReference>
<gene>
    <name evidence="1" type="primary">gyrA</name>
    <name type="synonym">hisW</name>
    <name evidence="35" type="synonym">nalA</name>
    <name type="synonym">parD</name>
    <name type="ordered locus">b2231</name>
    <name type="ordered locus">JW2225</name>
</gene>
<accession>P0AES4</accession>
<accession>P09097</accession>
<comment type="function">
    <text evidence="4 8 9 12 13 14 15 16 18 19 20 24 25 26 29 30 32">A type II topoisomerase that negatively supercoils closed circular double-stranded (ds) DNA in an ATP-dependent manner to maintain chromosomes in an underwound state (PubMed:12051842, PubMed:18642932, PubMed:186775, PubMed:19060136, PubMed:19965760, PubMed:20356737, PubMed:22457353, PubMed:23294697, PubMed:3031051, PubMed:7811004, PubMed:9148951). This makes better substrates for topoisomerase IV (ParC and ParE) which is the main enzyme that unlinks newly replicated chromosomes in E.coli (PubMed:9334322). Gyrase catalyzes the interconversion of other topological isomers of dsDNA rings, including catenanes (PubMed:22457352). Relaxes negatively supercoiled DNA in an ATP-independent manner (PubMed:337300). E.coli gyrase has higher supercoiling activity than many other bacterial gyrases; at comparable concentrations E.coli gyrase introduces more supercoils faster than M.tuberculosis gyrase, while M.tuberculosis gyrase has higher decatenation than supercoiling activity compared to E.coli (PubMed:22457352). E.coli makes 15% more negative supercoils in pBR322 plasmid DNA than S.typhimurium; the S.typhimurium GyrB subunit is toxic in E.coli, while the E.coli copy can be expressed in S.typhimurium even though the 2 subunits have 777/804 residues identical (PubMed:17400739). The enzymatic differences between E.coli gyrase and topoisomerase IV are largely due to the GyrA C-terminal domain (approximately residues 524-841) and specifically the GyrA-box (PubMed:16332690, PubMed:8962066).</text>
</comment>
<comment type="function">
    <text>Negative supercoiling favors strand separation, and DNA replication, transcription, recombination and repair, all of which involve strand separation. Type II topoisomerases break and join 2 DNA strands simultaneously in an ATP-dependent manner.</text>
</comment>
<comment type="catalytic activity">
    <reaction evidence="1 4 12 13 15 31">
        <text>ATP-dependent breakage, passage and rejoining of double-stranded DNA.</text>
        <dbReference type="EC" id="5.6.2.2"/>
    </reaction>
</comment>
<comment type="activity regulation">
    <text evidence="14 16 20 25 26 30">Gyrase is the target of many classes of inhibitors, including coumarins, cyclothialidines, pyrrolopyrimidines, pyrazolthiazoles and (fluoro)quinolones. Quinolones bind GyrA when the enzyme is complexed with DNA and trap the enzyme in a covalent reaction intermediate with DNA (PubMed:12051842, PubMed:3031051). Coumarins bind to GyrB and are competitive inhibitors of its ATPase activity (PubMed:7811004). Cyclothialidines also bind GyrB and are ATPase competitive inhibitors; they seem to act differently from coumarins (PubMed:7811004). Pyrrolopyrimidines inhibit both GyrB and its paralog in topoisomerase IV (parE) (PubMed:23294697). Pyrazolthiazoles also inhibit the ATPase activity of GyrB (PubMed:20356737). DNA supercoiling and relaxation are both inhibited by oxolinic acid (PubMed:337300). Acriflavine inhibits supercoiling activity and DNA-stimulated ATPase activity (PubMed:9148951). DNA supercoiling activity is protected from fluoroquinolone inhibition by QnrB4; QnrB4 has no effect on supercoiling activity alone (PubMed:19060136).</text>
</comment>
<comment type="subunit">
    <text evidence="4 5 6 12 15 27 28 30">Heterotetramer, composed of two GyrA and two GyrB chains (PubMed:12051842, PubMed:9148951). In the heterotetramer, GyrA contains the active site tyrosine that forms a transient covalent intermediate with the DNA, while GyrB binds cofactors and catalyzes ATP hydrolysis (PubMed:12051842, PubMed:18642932, PubMed:19965760, PubMed:9148951). Can form a 2:2 complex with toxin CcdB in which GyrA is inactive; rejuvenation of GyrA(2)CcdB(2) is effected by CcdA (PubMed:1324324, PubMed:15854646, PubMed:8254658, PubMed:8604132).</text>
</comment>
<comment type="interaction">
    <interactant intactId="EBI-547129">
        <id>P0AES4</id>
    </interactant>
    <interactant intactId="EBI-25647730">
        <id>P62554</id>
        <label>ccdB</label>
    </interactant>
    <organismsDiffer>false</organismsDiffer>
    <experiments>3</experiments>
</comment>
<comment type="interaction">
    <interactant intactId="EBI-547129">
        <id>P0AES4</id>
    </interactant>
    <interactant intactId="EBI-547129">
        <id>P0AES4</id>
        <label>gyrA</label>
    </interactant>
    <organismsDiffer>false</organismsDiffer>
    <experiments>6</experiments>
</comment>
<comment type="interaction">
    <interactant intactId="EBI-547129">
        <id>P0AES4</id>
    </interactant>
    <interactant intactId="EBI-541911">
        <id>P0AES6</id>
        <label>gyrB</label>
    </interactant>
    <organismsDiffer>false</organismsDiffer>
    <experiments>7</experiments>
</comment>
<comment type="subcellular location">
    <subcellularLocation>
        <location evidence="1">Cytoplasm</location>
    </subcellularLocation>
</comment>
<comment type="domain">
    <text evidence="29">An N-terminal fragment (residues 1-523) can be reconstituted with GyrB, but the complex no longer has negative supercoiling or ATP-independent DNA relaxation activities, although it is capable of DNA cleavage; ATP-dependent relaxation is inhibited by novobiocin and non-hydrolyzable ATP analogs (PubMed:8962066). The fragment has ATP-dependent DNA relaxation and 30-fold improved decatenation activities, unlike holoenzyme it preferentially binds supercoiled DNA (PubMed:8962066). This N-terminal fragment becomes a topoisomerase IV-like enzyme; it poorly complements a temperature-sensitive parC mutation (parC is the topoisomerase IV paralog of gyrA) (PubMed:8962066).</text>
</comment>
<comment type="domain">
    <text evidence="7 8 19 38">The C-terminal domain (CTD, approximately residues 535-841) contains 6 tandemly repeated subdomains known as blades, each of which is composed of a 4-stranded antiparallel beta-sheet (PubMed:15897198). The blades form a circular-shaped beta-pinwheel fold arranged in a spiral around a screw axis, to which DNA probably binds, inducing strong positive superhelicity (about 0.8 links/protein) (PubMed:15897198). The non-conserved, C-terminal acidic tail (residues 842-875) regulates wrapping and DNA-binding by the CTD; deletions within the tail show it is autoinhibitory for DNA wrapping and binding, and couples ATP hydrolysis to DNA strand passage (PubMed:22457353). The GyrA-box is a 7 amino acid motif found in the first blade of the CTD which is discriminative for gyrase versus topoisomerase IV activity (PubMed:9426128). The GyrA-box is required for wrapping of DNA around gyrase, and thus is essential for the DNA supercoiling activity but not DNA relaxation or decatenation activities of gyrase (PubMed:16332690).</text>
</comment>
<comment type="miscellaneous">
    <text evidence="5 24 27 37">When the enzyme transiently cleaves DNA a phosphotyrosine bond is formed between GyrA and DNA (PubMed:3031051). In the presence of quinolones this intermediate can be trapped and is used as an indicator of drug toxicity (PubMed:12051842). The enzyme-DNA intermediate is also the target of a number of topoisomerase poisons, including toxin CcdB (PubMed:1324324, PubMed:8254658).</text>
</comment>
<comment type="miscellaneous">
    <text evidence="1 9 18">Few gyrases are as efficient as E.coli at forming negative supercoils (PubMed:17400739, PubMed:22457352). Not all organisms have 2 type II topoisomerases; in organisms with a single type II topoisomerase this enzyme also has to decatenate newly replicated chromosomes.</text>
</comment>
<comment type="similarity">
    <text evidence="1">Belongs to the type II topoisomerase GyrA/ParC subunit family.</text>
</comment>
<reference key="1">
    <citation type="journal article" date="1987" name="J. Mol. Biol.">
        <title>Cloning and sequencing of the Escherichia coli gyrA gene coding for the A subunit of DNA gyrase.</title>
        <authorList>
            <person name="Swanberg S.L."/>
            <person name="Wang J.C."/>
        </authorList>
    </citation>
    <scope>NUCLEOTIDE SEQUENCE [GENOMIC DNA]</scope>
</reference>
<reference key="2">
    <citation type="journal article" date="1988" name="Mol. Gen. Genet.">
        <title>Quinolone-resistant mutations of the gyrA gene of Escherichia coli.</title>
        <authorList>
            <person name="Yoshida H."/>
            <person name="Kojima T."/>
            <person name="Yamagishi J."/>
            <person name="Nakamura S."/>
        </authorList>
    </citation>
    <scope>NUCLEOTIDE SEQUENCE [GENOMIC DNA]</scope>
    <source>
        <strain>K12 / KL16</strain>
    </source>
</reference>
<reference key="3">
    <citation type="journal article" date="1987" name="Mol. Microbiol.">
        <title>The parD- mutant of Escherichia coli also carries a gyrAam mutation. The complete sequence of gyrA.</title>
        <authorList>
            <person name="Hussain K."/>
            <person name="Elliott E.J."/>
            <person name="Salmond G.P.C."/>
        </authorList>
    </citation>
    <scope>NUCLEOTIDE SEQUENCE [GENOMIC DNA]</scope>
    <scope>VARIANT NAL-113 ASN-87</scope>
    <scope>VARIANT OV6 MET-MET-ILE-798 INS</scope>
    <source>
        <strain>OV6</strain>
    </source>
</reference>
<reference key="4">
    <citation type="journal article" date="1989" name="Antimicrob. Agents Chemother.">
        <title>Cloning and characterization of a DNA gyrase A gene from Escherichia coli that confers clinical resistance to 4-quinolones.</title>
        <authorList>
            <person name="Cullen M.E."/>
            <person name="Wyke A.W."/>
            <person name="Kuroda R."/>
            <person name="Fisher L.M."/>
        </authorList>
    </citation>
    <scope>NUCLEOTIDE SEQUENCE [GENOMIC DNA]</scope>
    <scope>VARIANTS QUINOLONE-RESISTANT GLU-678 AND SER-828</scope>
    <source>
        <strain>227</strain>
    </source>
</reference>
<reference key="5">
    <citation type="journal article" date="1997" name="DNA Res.">
        <title>Construction of a contiguous 874-kb sequence of the Escherichia coli-K12 genome corresponding to 50.0-68.8 min on the linkage map and analysis of its sequence features.</title>
        <authorList>
            <person name="Yamamoto Y."/>
            <person name="Aiba H."/>
            <person name="Baba T."/>
            <person name="Hayashi K."/>
            <person name="Inada T."/>
            <person name="Isono K."/>
            <person name="Itoh T."/>
            <person name="Kimura S."/>
            <person name="Kitagawa M."/>
            <person name="Makino K."/>
            <person name="Miki T."/>
            <person name="Mitsuhashi N."/>
            <person name="Mizobuchi K."/>
            <person name="Mori H."/>
            <person name="Nakade S."/>
            <person name="Nakamura Y."/>
            <person name="Nashimoto H."/>
            <person name="Oshima T."/>
            <person name="Oyama S."/>
            <person name="Saito N."/>
            <person name="Sampei G."/>
            <person name="Satoh Y."/>
            <person name="Sivasundaram S."/>
            <person name="Tagami H."/>
            <person name="Takahashi H."/>
            <person name="Takeda J."/>
            <person name="Takemoto K."/>
            <person name="Uehara K."/>
            <person name="Wada C."/>
            <person name="Yamagata S."/>
            <person name="Horiuchi T."/>
        </authorList>
    </citation>
    <scope>NUCLEOTIDE SEQUENCE [LARGE SCALE GENOMIC DNA]</scope>
    <source>
        <strain>K12 / W3110 / ATCC 27325 / DSM 5911</strain>
    </source>
</reference>
<reference key="6">
    <citation type="journal article" date="1997" name="Science">
        <title>The complete genome sequence of Escherichia coli K-12.</title>
        <authorList>
            <person name="Blattner F.R."/>
            <person name="Plunkett G. III"/>
            <person name="Bloch C.A."/>
            <person name="Perna N.T."/>
            <person name="Burland V."/>
            <person name="Riley M."/>
            <person name="Collado-Vides J."/>
            <person name="Glasner J.D."/>
            <person name="Rode C.K."/>
            <person name="Mayhew G.F."/>
            <person name="Gregor J."/>
            <person name="Davis N.W."/>
            <person name="Kirkpatrick H.A."/>
            <person name="Goeden M.A."/>
            <person name="Rose D.J."/>
            <person name="Mau B."/>
            <person name="Shao Y."/>
        </authorList>
    </citation>
    <scope>NUCLEOTIDE SEQUENCE [LARGE SCALE GENOMIC DNA]</scope>
    <source>
        <strain>K12 / MG1655 / ATCC 47076</strain>
    </source>
</reference>
<reference key="7">
    <citation type="journal article" date="2006" name="Mol. Syst. Biol.">
        <title>Highly accurate genome sequences of Escherichia coli K-12 strains MG1655 and W3110.</title>
        <authorList>
            <person name="Hayashi K."/>
            <person name="Morooka N."/>
            <person name="Yamamoto Y."/>
            <person name="Fujita K."/>
            <person name="Isono K."/>
            <person name="Choi S."/>
            <person name="Ohtsubo E."/>
            <person name="Baba T."/>
            <person name="Wanner B.L."/>
            <person name="Mori H."/>
            <person name="Horiuchi T."/>
        </authorList>
    </citation>
    <scope>NUCLEOTIDE SEQUENCE [LARGE SCALE GENOMIC DNA]</scope>
    <source>
        <strain>K12 / W3110 / ATCC 27325 / DSM 5911</strain>
    </source>
</reference>
<reference key="8">
    <citation type="journal article" date="1987" name="J. Bacteriol.">
        <title>Fusions of the Escherichia coli gyrA and gyrB control regions to the galactokinase gene are inducible by coumermycin treatment.</title>
        <authorList>
            <person name="Menzel R."/>
            <person name="Gellert M."/>
        </authorList>
    </citation>
    <scope>NUCLEOTIDE SEQUENCE [GENOMIC DNA] OF 1-88</scope>
    <scope>PARTIAL PROTEIN SEQUENCE</scope>
</reference>
<reference key="9">
    <citation type="journal article" date="1987" name="J. Biol. Chem.">
        <title>Mapping the active site tyrosine of Escherichia coli DNA gyrase.</title>
        <authorList>
            <person name="Horowitz D.S."/>
            <person name="Wang J.C."/>
        </authorList>
    </citation>
    <scope>PROTEIN SEQUENCE OF 17-24; 61-66 AND 123-126</scope>
    <scope>FUNCTION</scope>
    <scope>ACTIVE SITE</scope>
    <scope>REACTION MECHANISM</scope>
    <scope>DNA-BINDING</scope>
</reference>
<reference key="10">
    <citation type="journal article" date="1976" name="Proc. Natl. Acad. Sci. U.S.A.">
        <title>DNA gyrase: an enzyme that introduces superhelical turns into DNA.</title>
        <authorList>
            <person name="Gellert M."/>
            <person name="Mizuuchi K."/>
            <person name="O'Dea M.H."/>
            <person name="Nash H.A."/>
        </authorList>
    </citation>
    <scope>FUNCTION IN GENERATING NEGATIVELY SUPERCOILED DNA</scope>
    <scope>CATALYTIC ACTIVITY</scope>
    <scope>ATP-DEPENDENCE</scope>
</reference>
<reference key="11">
    <citation type="journal article" date="1977" name="Proc. Natl. Acad. Sci. U.S.A.">
        <title>Nalidixic acid resistance: a second genetic character involved in DNA gyrase activity.</title>
        <authorList>
            <person name="Gellert M."/>
            <person name="Mizuuchi K."/>
            <person name="O'Dea M.H."/>
            <person name="Itoh T."/>
            <person name="Tomizawa J.I."/>
        </authorList>
    </citation>
    <scope>FUNCTION IN RELAXING SUPERCOILED DNA</scope>
    <scope>ACTIVITY REGULATION</scope>
</reference>
<reference key="12">
    <citation type="journal article" date="1990" name="Antimicrob. Agents Chemother.">
        <title>Quinolone resistance-determining region in the DNA gyrase gyrA gene of Escherichia coli.</title>
        <authorList>
            <person name="Yoshida H."/>
            <person name="Bogaki M."/>
            <person name="Nakamura M."/>
            <person name="Nakamura S."/>
        </authorList>
    </citation>
    <scope>VARIANTS QUINOLONE-RESISTANT SER-67; CYS-81; LEU-83; TRP-83; PRO-84; ASN-87 AND HIS-106</scope>
    <source>
        <strain>K12 / KL16</strain>
    </source>
</reference>
<reference key="13">
    <citation type="journal article" date="1991" name="Antimicrob. Agents Chemother.">
        <title>4-quinolone resistance mutations in the DNA gyrase of Escherichia coli clinical isolates identified by using the polymerase chain reaction.</title>
        <authorList>
            <person name="Oram M."/>
            <person name="Fisher L.M."/>
        </authorList>
    </citation>
    <scope>VARIANTS QUINOLONE-RESISTANT LEU-83; TRP-83 AND VAL-87</scope>
</reference>
<reference key="14">
    <citation type="journal article" date="1991" name="Antimicrob. Agents Chemother.">
        <title>Novel quinolone resistance mutations of the Escherichia coli DNA gyrase A protein: enzymatic analysis of the mutant proteins.</title>
        <authorList>
            <person name="Hallett P."/>
            <person name="Maxwell A."/>
        </authorList>
    </citation>
    <scope>MUTAGENESIS OF SER-83 AND GLN-106</scope>
    <source>
        <strain>K12</strain>
    </source>
</reference>
<reference key="15">
    <citation type="journal article" date="1992" name="J. Mol. Biol.">
        <title>Cell killing by the F plasmid CcdB protein involves poisoning of DNA-topoisomerase II complexes.</title>
        <authorList>
            <person name="Bernard P."/>
            <person name="Couturier M."/>
        </authorList>
    </citation>
    <scope>INHIBITION BY TOXIN PROTEIN CCDB</scope>
    <scope>MUTAGENESIS OF ARG-462</scope>
    <source>
        <strain>K12</strain>
    </source>
</reference>
<reference key="16">
    <citation type="journal article" date="1993" name="J. Mol. Biol.">
        <title>The F plasmid CcdB protein induces efficient ATP-dependent DNA cleavage by gyrase.</title>
        <authorList>
            <person name="Bernard P."/>
            <person name="Kezdy K.E."/>
            <person name="Van Melderen L."/>
            <person name="Steyaert J."/>
            <person name="Wyns L."/>
            <person name="Pato M.L."/>
            <person name="Higgins P.N."/>
            <person name="Couturier M."/>
        </authorList>
    </citation>
    <scope>MUTAGENESIS OF ARG-462</scope>
</reference>
<reference key="17">
    <citation type="journal article" date="1994" name="Antimicrob. Agents Chemother.">
        <title>Mechanism of inhibition of DNA gyrase by cyclothialidine, a novel DNA gyrase inhibitor.</title>
        <authorList>
            <person name="Nakada N."/>
            <person name="Gmuender H."/>
            <person name="Hirata T."/>
            <person name="Arisawa M."/>
        </authorList>
    </citation>
    <scope>FUNCTION</scope>
    <scope>ACTIVITY REGULATION</scope>
</reference>
<reference key="18">
    <citation type="journal article" date="1996" name="J. Mol. Biol.">
        <title>Partner switching mechanisms in inactivation and rejuvenation of Escherichia coli DNA gyrase by F plasmid proteins LetD (CcdB) and LetA (CcdA).</title>
        <authorList>
            <person name="Maki S."/>
            <person name="Takiguchi S."/>
            <person name="Horiuchi T."/>
            <person name="Sekimizu K."/>
            <person name="Miki T."/>
        </authorList>
    </citation>
    <scope>INHIBITION BY TOXIN PROTEIN CCDB</scope>
    <scope>REJUVENATION BY CCDA</scope>
    <scope>SUBUNIT</scope>
</reference>
<reference key="19">
    <citation type="journal article" date="1996" name="Proc. Natl. Acad. Sci. U.S.A.">
        <title>Conversion of DNA gyrase into a conventional type II topoisomerase.</title>
        <authorList>
            <person name="Kampranis S.C."/>
            <person name="Maxwell A."/>
        </authorList>
    </citation>
    <scope>FUNCTION</scope>
    <scope>DOMAIN</scope>
</reference>
<reference key="20">
    <citation type="journal article" date="1997" name="J. Biol. Chem.">
        <title>acrB mutation located at carboxyl-terminal region of gyrase B subunit reduces DNA binding of DNA gyrase.</title>
        <authorList>
            <person name="Funatsuki K."/>
            <person name="Tanaka R."/>
            <person name="Inagaki S."/>
            <person name="Konno H."/>
            <person name="Katoh K."/>
            <person name="Nakamura H."/>
        </authorList>
    </citation>
    <scope>FUNCTION</scope>
    <scope>ACTIVITY REGULATION</scope>
    <scope>SUBUNIT</scope>
    <scope>DNA-BINDING</scope>
    <source>
        <strain>K12 / N2879</strain>
    </source>
</reference>
<reference key="21">
    <citation type="journal article" date="1997" name="Electrophoresis">
        <title>Escherichia coli proteome analysis using the gene-protein database.</title>
        <authorList>
            <person name="VanBogelen R.A."/>
            <person name="Abshire K.Z."/>
            <person name="Moldover B."/>
            <person name="Olson E.R."/>
            <person name="Neidhardt F.C."/>
        </authorList>
    </citation>
    <scope>IDENTIFICATION BY 2D-GEL</scope>
</reference>
<reference key="22">
    <citation type="journal article" date="1997" name="Genes Dev.">
        <title>Topoisomerase IV, not gyrase, decatenates products of site-specific recombination in Escherichia coli.</title>
        <authorList>
            <person name="Zechiedrich E.L."/>
            <person name="Khodursky A.B."/>
            <person name="Cozzarelli N.R."/>
        </authorList>
    </citation>
    <scope>FUNCTION</scope>
</reference>
<reference key="23">
    <citation type="journal article" date="1997" name="Mol. Microbiol.">
        <title>Requirement of topoisomerase IV parC and parE genes for cell cycle progression and developmental regulation in Caulobacter crescentus.</title>
        <authorList>
            <person name="Ward D.V."/>
            <person name="Newton A."/>
        </authorList>
    </citation>
    <scope>IDENTIFICATION AND DISCUSSION OF GYRA-BOX</scope>
    <scope>DOMAIN</scope>
</reference>
<reference key="24">
    <citation type="journal article" date="2002" name="J. Mol. Biol.">
        <title>Identification of four GyrA residues involved in the DNA breakage-reunion reaction of DNA gyrase.</title>
        <authorList>
            <person name="Hockings S.C."/>
            <person name="Maxwell A."/>
        </authorList>
    </citation>
    <scope>FUNCTION</scope>
    <scope>CATALYTIC ACTIVITY</scope>
    <scope>SUBUNIT</scope>
    <scope>MUTAGENESIS OF ARG-32; ARG-47; HIS-78 AND HIS-80</scope>
</reference>
<reference key="25">
    <citation type="journal article" date="2006" name="J. Biol. Chem.">
        <title>The 'GyrA-box' is required for the ability of DNA gyrase to wrap DNA and catalyze the supercoiling reaction.</title>
        <authorList>
            <person name="Kramlinger V.M."/>
            <person name="Hiasa H."/>
        </authorList>
    </citation>
    <scope>FUNCTION</scope>
    <scope>MUTAGENESIS OF 560-GLN--GLY-566</scope>
</reference>
<reference key="26">
    <citation type="journal article" date="2007" name="J. Bacteriol.">
        <title>Growth rate toxicity phenotypes and homeostatic supercoil control differentiate Escherichia coli from Salmonella enterica serovar Typhimurium.</title>
        <authorList>
            <person name="Champion K."/>
            <person name="Higgins N.P."/>
        </authorList>
    </citation>
    <scope>FUNCTION</scope>
    <source>
        <strain>K12 / W3110 / ATCC 27325 / DSM 5911</strain>
    </source>
</reference>
<reference key="27">
    <citation type="journal article" date="2008" name="Biochemistry">
        <title>DNA gyrase requires DNA for effective two-site coordination of divalent metal ions: further insight into the mechanism of enzyme action.</title>
        <authorList>
            <person name="Sissi C."/>
            <person name="Chemello A."/>
            <person name="Vazquez E."/>
            <person name="Mitchenall L.A."/>
            <person name="Maxwell A."/>
            <person name="Palumbo M."/>
        </authorList>
    </citation>
    <scope>FUNCTION</scope>
    <scope>CATALYTIC ACTIVITY</scope>
    <scope>SUBUNIT</scope>
</reference>
<reference key="28">
    <citation type="journal article" date="2009" name="J. Bacteriol.">
        <title>The pentapeptide repeat proteins MfpAMt and QnrB4 exhibit opposite effects on DNA gyrase catalytic reactions and on the ternary gyrase-DNA-quinolone complex.</title>
        <authorList>
            <person name="Merens A."/>
            <person name="Matrat S."/>
            <person name="Aubry A."/>
            <person name="Lascols C."/>
            <person name="Jarlier V."/>
            <person name="Soussy C.J."/>
            <person name="Cavallo J.D."/>
            <person name="Cambau E."/>
        </authorList>
    </citation>
    <scope>FUNCTION</scope>
    <scope>ACTIVITY REGULATION</scope>
</reference>
<reference key="29">
    <citation type="journal article" date="2010" name="Bioorg. Med. Chem. Lett.">
        <title>Discovery of pyrazolthiazoles as novel and potent inhibitors of bacterial gyrase.</title>
        <authorList>
            <person name="Ronkin S.M."/>
            <person name="Badia M."/>
            <person name="Bellon S."/>
            <person name="Grillot A.L."/>
            <person name="Gross C.H."/>
            <person name="Grossman T.H."/>
            <person name="Mani N."/>
            <person name="Parsons J.D."/>
            <person name="Stamos D."/>
            <person name="Trudeau M."/>
            <person name="Wei Y."/>
            <person name="Charifson P.S."/>
        </authorList>
    </citation>
    <scope>FUNCTION</scope>
    <scope>ACTIVITY REGULATION</scope>
</reference>
<reference key="30">
    <citation type="journal article" date="2012" name="J. Biol. Chem.">
        <title>Mechanisms for defining supercoiling set point of DNA gyrase orthologs: I. A nonconserved acidic C-terminal tail modulates Escherichia coli gyrase activity.</title>
        <authorList>
            <person name="Tretter E.M."/>
            <person name="Berger J.M."/>
        </authorList>
    </citation>
    <scope>FUNCTION</scope>
    <scope>DOMAIN</scope>
    <scope>DNA-BINDING</scope>
    <scope>MUTAGENESIS OF 842-PRO--ALA-856 AND 854-SER--GLU-875</scope>
</reference>
<reference key="31">
    <citation type="journal article" date="2012" name="J. Biol. Chem.">
        <title>Mechanisms for defining supercoiling set point of DNA gyrase orthologs: II. The shape of the GyrA subunit C-terminal domain (CTD) is not a sole determinant for controlling supercoiling efficiency.</title>
        <authorList>
            <person name="Tretter E.M."/>
            <person name="Berger J.M."/>
        </authorList>
    </citation>
    <scope>FUNCTION</scope>
    <scope>DNA-BINDING</scope>
    <scope>MUTAGENESIS OF 842-PRO--ALA-856</scope>
</reference>
<reference key="32">
    <citation type="journal article" date="2013" name="Bioorg. Med. Chem. Lett.">
        <title>Pyrrolopyrimidine inhibitors of DNA gyrase B (GyrB) and topoisomerase IV (ParE), Part II: development of inhibitors with broad spectrum, Gram-negative antibacterial activity.</title>
        <authorList>
            <person name="Trzoss M."/>
            <person name="Bensen D.C."/>
            <person name="Li X."/>
            <person name="Chen Z."/>
            <person name="Lam T."/>
            <person name="Zhang J."/>
            <person name="Creighton C.J."/>
            <person name="Cunningham M.L."/>
            <person name="Kwan B."/>
            <person name="Stidham M."/>
            <person name="Nelson K."/>
            <person name="Brown-Driver V."/>
            <person name="Castellano A."/>
            <person name="Shaw K.J."/>
            <person name="Lightstone F.C."/>
            <person name="Wong S.E."/>
            <person name="Nguyen T.B."/>
            <person name="Finn J."/>
            <person name="Tari L.W."/>
        </authorList>
    </citation>
    <scope>FUNCTION</scope>
    <scope>ACTIVITY REGULATION</scope>
</reference>
<reference key="33">
    <citation type="journal article" date="1997" name="Nature">
        <title>Crystal structure of the breakage-reunion domain of DNA gyrase.</title>
        <authorList>
            <person name="Morais Cabral J.H."/>
            <person name="Jackson A.P."/>
            <person name="Smith C.V."/>
            <person name="Shikotra N."/>
            <person name="Maxwell A."/>
            <person name="Liddington R.C."/>
        </authorList>
    </citation>
    <scope>X-RAY CRYSTALLOGRAPHY (2.8 ANGSTROMS) OF 30-522</scope>
    <scope>CATALYTIC ACTIVITY</scope>
</reference>
<reference key="34">
    <citation type="journal article" date="2005" name="J. Mol. Biol.">
        <title>Molecular basis of gyrase poisoning by the addiction toxin CcdB.</title>
        <authorList>
            <person name="Dao-Thi M.H."/>
            <person name="Van Melderen L."/>
            <person name="De Genst E."/>
            <person name="Afif H."/>
            <person name="Buts L."/>
            <person name="Wyns L."/>
            <person name="Loris R."/>
        </authorList>
    </citation>
    <scope>X-RAY CRYSTALLOGRAPHY (2.8 ANGSTROMS) OF 363-494 IN COMPLEX WITH CCBD</scope>
    <scope>SUBUNIT</scope>
</reference>
<reference key="35">
    <citation type="journal article" date="2005" name="J. Biol. Chem.">
        <title>A superhelical spiral in the Escherichia coli DNA gyrase A C-terminal domain imparts unidirectional supercoiling bias.</title>
        <authorList>
            <person name="Ruthenburg A.J."/>
            <person name="Graybosch D.M."/>
            <person name="Huetsch J.C."/>
            <person name="Verdine G.L."/>
        </authorList>
    </citation>
    <scope>X-RAY CRYSTALLOGRAPHY (2.6 ANGSTROMS) OF 535-841</scope>
    <scope>DOMAIN</scope>
    <source>
        <strain>K12</strain>
    </source>
</reference>
<reference key="36">
    <citation type="journal article" date="2009" name="Science">
        <title>A crystal structure of the bifunctional antibiotic simocyclinone D8, bound to DNA gyrase.</title>
        <authorList>
            <person name="Edwards M.J."/>
            <person name="Flatman R.H."/>
            <person name="Mitchenall L.A."/>
            <person name="Stevenson C.E."/>
            <person name="Le T.B."/>
            <person name="Clarke T.A."/>
            <person name="McKay A.R."/>
            <person name="Fiedler H.P."/>
            <person name="Buttner M.J."/>
            <person name="Lawson D.M."/>
            <person name="Maxwell A."/>
        </authorList>
    </citation>
    <scope>X-RAY CRYSTALLOGRAPHY (2.62 ANGSTROMS) OF 1-525 IN COMPLEX WITH ANTIBIOTIC</scope>
    <scope>FUNCTION</scope>
    <scope>CATALYTIC ACTIVITY</scope>
    <scope>SUBUNIT</scope>
</reference>
<keyword id="KW-0002">3D-structure</keyword>
<keyword id="KW-0046">Antibiotic resistance</keyword>
<keyword id="KW-0067">ATP-binding</keyword>
<keyword id="KW-0963">Cytoplasm</keyword>
<keyword id="KW-0903">Direct protein sequencing</keyword>
<keyword id="KW-0238">DNA-binding</keyword>
<keyword id="KW-0413">Isomerase</keyword>
<keyword id="KW-0547">Nucleotide-binding</keyword>
<keyword id="KW-1185">Reference proteome</keyword>
<keyword id="KW-0799">Topoisomerase</keyword>
<sequence>MSDLAREITPVNIEEELKSSYLDYAMSVIVGRALPDVRDGLKPVHRRVLYAMNVLGNDWNKAYKKSARVVGDVIGKYHPHGDSAVYDTIVRMAQPFSLRYMLVDGQGNFGSIDGDSAAAMRYTEIRLAKIAHELMADLEKETVDFVDNYDGTEKIPDVMPTKIPNLLVNGSSGIAVGMATNIPPHNLTEVINGCLAYIDDEDISIEGLMEHIPGPDFPTAAIINGRRGIEEAYRTGRGKVYIRARAEVEVDAKTGRETIIVHEIPYQVNKARLIEKIAELVKEKRVEGISALRDESDKDGMRIVIEVKRDAVGEVVLNNLYSQTQLQVSFGINMVALHHGQPKIMNLKDIIAAFVRHRREVVTRRTIFELRKARDRAHILEALAVALANIDPIIELIRHAPTPAEAKTALVANPWQLGNVAAMLERAGDDAARPEWLEPEFGVRDGLYYLTEQQAQAILDLRLQKLTGLEHEKLLDEYKELLDQIAELLRILGSADRLMEVIREELELVREQFGDKRRTEITANSADINLEDLITQEDVVVTLSHQGYVKYQPLSEYEAQRRGGKGKSAARIKEEDFIDRLLVANTHDHILCFSSRGRVYSMKVYQLPEATRGARGRPIVNLLPLEQDERITAILPVTEFEEGVKVFMATANGTVKKTVLTEFNRLRTAGKVAIKLVDGDELIGVDLTSGEDEVMLFSAEGKVVRFKESSVRAMGCNTTGVRGIRLGEGDKVVSLIVPRGDGAILTATQNGYGKRTAVAEYPTKSRATKGVISIKVTERNGLVVGAVQVDDCDQIMMITDAGTLVRTRVSEISIVGRNTQGVILIRTAEDENVVGLQRVAEPVDEEDLDTIDGSAAEGDDEIAPEVDVDDEPEEE</sequence>
<feature type="initiator methionine" description="Removed" evidence="23">
    <location>
        <position position="1"/>
    </location>
</feature>
<feature type="chain" id="PRO_0000145232" description="DNA gyrase subunit A">
    <location>
        <begin position="2"/>
        <end position="875"/>
    </location>
</feature>
<feature type="domain" description="Topo IIA-type catalytic" evidence="2">
    <location>
        <begin position="34"/>
        <end position="533"/>
    </location>
</feature>
<feature type="region of interest" description="C-terminal domain (CTD)" evidence="33">
    <location>
        <begin position="531"/>
        <end position="841"/>
    </location>
</feature>
<feature type="region of interest" description="Disordered" evidence="3">
    <location>
        <begin position="841"/>
        <end position="875"/>
    </location>
</feature>
<feature type="region of interest" description="Acidic tail" evidence="34">
    <location>
        <begin position="842"/>
        <end position="875"/>
    </location>
</feature>
<feature type="short sequence motif" description="GyrA-box" evidence="1 36">
    <location>
        <begin position="560"/>
        <end position="566"/>
    </location>
</feature>
<feature type="compositionally biased region" description="Acidic residues" evidence="3">
    <location>
        <begin position="857"/>
        <end position="875"/>
    </location>
</feature>
<feature type="active site" description="O-(5'-phospho-DNA)-tyrosine intermediate" evidence="1 24">
    <location>
        <position position="122"/>
    </location>
</feature>
<feature type="sequence variant" description="In PPA-10; quinolone-resistant." evidence="17">
    <original>A</original>
    <variation>S</variation>
    <location>
        <position position="67"/>
    </location>
</feature>
<feature type="sequence variant" description="In NAL-97; quinolone-resistant." evidence="17">
    <original>G</original>
    <variation>C</variation>
    <location>
        <position position="81"/>
    </location>
</feature>
<feature type="sequence variant" description="In NAL-51, NAL-112, NAL-118, NAL-119 and strains 58, 158, 218, 231 and 235; quinolone-resistant." evidence="11 17">
    <original>S</original>
    <variation>L</variation>
    <location>
        <position position="83"/>
    </location>
</feature>
<feature type="sequence variant" description="In PPA-18 and strains 233 and 227; quinolone-resistant." evidence="11 17 21">
    <original>S</original>
    <variation>W</variation>
    <location>
        <position position="83"/>
    </location>
</feature>
<feature type="sequence variant" description="In PPA-05; quinolone-resistant." evidence="17">
    <original>A</original>
    <variation>P</variation>
    <location>
        <position position="84"/>
    </location>
</feature>
<feature type="sequence variant" description="In NAL-113 and OV6; quinolone-resistant." evidence="17 22">
    <original>D</original>
    <variation>N</variation>
    <location>
        <position position="87"/>
    </location>
</feature>
<feature type="sequence variant" description="In strain: 202; partially quinolone-resistant." evidence="11">
    <original>D</original>
    <variation>V</variation>
    <location>
        <position position="87"/>
    </location>
</feature>
<feature type="sequence variant" description="In NAL-89; quinolone-resistant." evidence="17">
    <original>Q</original>
    <variation>H</variation>
    <location>
        <position position="106"/>
    </location>
</feature>
<feature type="sequence variant" description="In strain: 227." evidence="21">
    <original>D</original>
    <variation>E</variation>
    <location>
        <position position="678"/>
    </location>
</feature>
<feature type="sequence variant" description="In strain: OV6; quinolone-resistant." evidence="22">
    <original>I</original>
    <variation>IMMI</variation>
    <location>
        <position position="798"/>
    </location>
</feature>
<feature type="sequence variant" description="In strain: 227." evidence="21">
    <original>A</original>
    <variation>S</variation>
    <location>
        <position position="828"/>
    </location>
</feature>
<feature type="mutagenesis site" description="Nearly abolishes DNA supercoiling. Reduces quinolone-induced DNA cleavage and relaxation." evidence="4">
    <original>R</original>
    <variation>A</variation>
    <variation>Q</variation>
    <location>
        <position position="32"/>
    </location>
</feature>
<feature type="mutagenesis site" description="Nearly abolishes DNA supercoiling. Reduces quinolone-induced DNA cleavage. Slightly reduces DNA relaxation." evidence="4">
    <original>R</original>
    <variation>Q</variation>
    <location>
        <position position="47"/>
    </location>
</feature>
<feature type="mutagenesis site" description="Nearly abolishes DNA supercoiling. Reduces quinolone-induced DNA cleavage and DNA relaxation." evidence="4">
    <original>H</original>
    <variation>A</variation>
    <location>
        <position position="78"/>
    </location>
</feature>
<feature type="mutagenesis site" description="Reduces DNA supercoiling. Slightly reduces quinolone-induced DNA cleavage. No effect on DNA relaxation." evidence="4">
    <original>H</original>
    <variation>A</variation>
    <location>
        <position position="80"/>
    </location>
</feature>
<feature type="mutagenesis site" description="Resistant to fluoroquinolones." evidence="10">
    <original>S</original>
    <variation>A</variation>
    <location>
        <position position="83"/>
    </location>
</feature>
<feature type="mutagenesis site" description="Resistant to fluoroquinolones." evidence="10">
    <original>Q</original>
    <variation>R</variation>
    <location>
        <position position="106"/>
    </location>
</feature>
<feature type="mutagenesis site" description="In gyrA462; resistant to cytotoxic protein CcdB, but not to the quinoline antibiotic enoxacin, has no effect on DNA supercoiling. Does not interact with CcdB." evidence="5 27">
    <original>R</original>
    <variation>C</variation>
    <location>
        <position position="462"/>
    </location>
</feature>
<feature type="mutagenesis site" description="Loss of gyrase-mediated DNA wrapping, nearly complete loss of DNA supercoiling activity, no change in DNA supercoil relaxation or DNA decatenation activity." evidence="8">
    <original>QRRGGKG</original>
    <variation>AAAAAAA</variation>
    <location>
        <begin position="560"/>
        <end position="566"/>
    </location>
</feature>
<feature type="mutagenesis site" description="Loss of gyrase-mediated DNA wrapping, nearly complete loss of DNA supercoiling activity, no change in DNA supercoil relaxation or DNA decatenation activity." evidence="8">
    <location>
        <begin position="560"/>
        <end position="566"/>
    </location>
</feature>
<feature type="mutagenesis site" description="Gains ability to wrap DNA around itself in the absence of GyrB; holoenzyme gains ability to wrap DNA in the absence of ATP analogs, but reduces ATP-dependent supercoiling activity 50-fold, DNA is not as extensively negatively supercoiled, has 10-fold less ATP-independent negative supercoiled DNA relaxation activity, no change in ATPase activity of holoenzyme, no change in decatenation ability. Isolated CTD gains ability to wrap DNA around itself in the absence of GyrB, binds DNA better than wild-type CTD." evidence="18 19">
    <location>
        <begin position="842"/>
        <end position="856"/>
    </location>
</feature>
<feature type="mutagenesis site" description="Isolated CTD gains ability to wrap DNA around itself in the absence of GyrB, binds DNA better than wild-type CTD." evidence="19">
    <location>
        <begin position="854"/>
        <end position="875"/>
    </location>
</feature>
<feature type="strand" evidence="46">
    <location>
        <begin position="8"/>
        <end position="12"/>
    </location>
</feature>
<feature type="helix" evidence="46">
    <location>
        <begin position="13"/>
        <end position="31"/>
    </location>
</feature>
<feature type="turn" evidence="46">
    <location>
        <begin position="37"/>
        <end position="39"/>
    </location>
</feature>
<feature type="helix" evidence="46">
    <location>
        <begin position="43"/>
        <end position="55"/>
    </location>
</feature>
<feature type="strand" evidence="39">
    <location>
        <begin position="59"/>
        <end position="61"/>
    </location>
</feature>
<feature type="helix" evidence="46">
    <location>
        <begin position="66"/>
        <end position="76"/>
    </location>
</feature>
<feature type="helix" evidence="46">
    <location>
        <begin position="82"/>
        <end position="91"/>
    </location>
</feature>
<feature type="turn" evidence="46">
    <location>
        <begin position="95"/>
        <end position="97"/>
    </location>
</feature>
<feature type="strand" evidence="46">
    <location>
        <begin position="102"/>
        <end position="107"/>
    </location>
</feature>
<feature type="turn" evidence="39">
    <location>
        <begin position="120"/>
        <end position="122"/>
    </location>
</feature>
<feature type="strand" evidence="46">
    <location>
        <begin position="124"/>
        <end position="127"/>
    </location>
</feature>
<feature type="helix" evidence="46">
    <location>
        <begin position="130"/>
        <end position="132"/>
    </location>
</feature>
<feature type="turn" evidence="46">
    <location>
        <begin position="134"/>
        <end position="139"/>
    </location>
</feature>
<feature type="strand" evidence="46">
    <location>
        <begin position="145"/>
        <end position="147"/>
    </location>
</feature>
<feature type="strand" evidence="46">
    <location>
        <begin position="149"/>
        <end position="158"/>
    </location>
</feature>
<feature type="helix" evidence="46">
    <location>
        <begin position="165"/>
        <end position="169"/>
    </location>
</feature>
<feature type="strand" evidence="46">
    <location>
        <begin position="171"/>
        <end position="174"/>
    </location>
</feature>
<feature type="strand" evidence="46">
    <location>
        <begin position="179"/>
        <end position="182"/>
    </location>
</feature>
<feature type="helix" evidence="46">
    <location>
        <begin position="187"/>
        <end position="200"/>
    </location>
</feature>
<feature type="helix" evidence="46">
    <location>
        <begin position="205"/>
        <end position="208"/>
    </location>
</feature>
<feature type="turn" evidence="46">
    <location>
        <begin position="209"/>
        <end position="211"/>
    </location>
</feature>
<feature type="strand" evidence="46">
    <location>
        <begin position="222"/>
        <end position="224"/>
    </location>
</feature>
<feature type="helix" evidence="46">
    <location>
        <begin position="227"/>
        <end position="234"/>
    </location>
</feature>
<feature type="strand" evidence="46">
    <location>
        <begin position="236"/>
        <end position="243"/>
    </location>
</feature>
<feature type="strand" evidence="46">
    <location>
        <begin position="245"/>
        <end position="250"/>
    </location>
</feature>
<feature type="turn" evidence="46">
    <location>
        <begin position="252"/>
        <end position="254"/>
    </location>
</feature>
<feature type="strand" evidence="46">
    <location>
        <begin position="257"/>
        <end position="263"/>
    </location>
</feature>
<feature type="helix" evidence="46">
    <location>
        <begin position="270"/>
        <end position="282"/>
    </location>
</feature>
<feature type="strand" evidence="46">
    <location>
        <begin position="288"/>
        <end position="294"/>
    </location>
</feature>
<feature type="strand" evidence="39">
    <location>
        <begin position="298"/>
        <end position="300"/>
    </location>
</feature>
<feature type="strand" evidence="46">
    <location>
        <begin position="303"/>
        <end position="307"/>
    </location>
</feature>
<feature type="helix" evidence="46">
    <location>
        <begin position="313"/>
        <end position="323"/>
    </location>
</feature>
<feature type="strand" evidence="46">
    <location>
        <begin position="327"/>
        <end position="333"/>
    </location>
</feature>
<feature type="strand" evidence="46">
    <location>
        <begin position="335"/>
        <end position="338"/>
    </location>
</feature>
<feature type="strand" evidence="46">
    <location>
        <begin position="341"/>
        <end position="344"/>
    </location>
</feature>
<feature type="helix" evidence="46">
    <location>
        <begin position="347"/>
        <end position="385"/>
    </location>
</feature>
<feature type="helix" evidence="46">
    <location>
        <begin position="390"/>
        <end position="399"/>
    </location>
</feature>
<feature type="strand" evidence="40">
    <location>
        <begin position="400"/>
        <end position="402"/>
    </location>
</feature>
<feature type="helix" evidence="46">
    <location>
        <begin position="403"/>
        <end position="410"/>
    </location>
</feature>
<feature type="strand" evidence="45">
    <location>
        <begin position="411"/>
        <end position="413"/>
    </location>
</feature>
<feature type="helix" evidence="42">
    <location>
        <begin position="418"/>
        <end position="420"/>
    </location>
</feature>
<feature type="helix" evidence="46">
    <location>
        <begin position="421"/>
        <end position="426"/>
    </location>
</feature>
<feature type="turn" evidence="46">
    <location>
        <begin position="429"/>
        <end position="432"/>
    </location>
</feature>
<feature type="strand" evidence="43">
    <location>
        <begin position="435"/>
        <end position="437"/>
    </location>
</feature>
<feature type="strand" evidence="46">
    <location>
        <begin position="441"/>
        <end position="449"/>
    </location>
</feature>
<feature type="helix" evidence="46">
    <location>
        <begin position="452"/>
        <end position="459"/>
    </location>
</feature>
<feature type="helix" evidence="46">
    <location>
        <begin position="463"/>
        <end position="466"/>
    </location>
</feature>
<feature type="helix" evidence="46">
    <location>
        <begin position="468"/>
        <end position="492"/>
    </location>
</feature>
<feature type="helix" evidence="46">
    <location>
        <begin position="496"/>
        <end position="513"/>
    </location>
</feature>
<feature type="strand" evidence="46">
    <location>
        <begin position="520"/>
        <end position="522"/>
    </location>
</feature>
<feature type="strand" evidence="46">
    <location>
        <begin position="530"/>
        <end position="534"/>
    </location>
</feature>
<feature type="strand" evidence="41">
    <location>
        <begin position="538"/>
        <end position="544"/>
    </location>
</feature>
<feature type="strand" evidence="41">
    <location>
        <begin position="547"/>
        <end position="553"/>
    </location>
</feature>
<feature type="helix" evidence="41">
    <location>
        <begin position="556"/>
        <end position="560"/>
    </location>
</feature>
<feature type="turn" evidence="44">
    <location>
        <begin position="563"/>
        <end position="565"/>
    </location>
</feature>
<feature type="strand" evidence="41">
    <location>
        <begin position="578"/>
        <end position="585"/>
    </location>
</feature>
<feature type="strand" evidence="41">
    <location>
        <begin position="589"/>
        <end position="594"/>
    </location>
</feature>
<feature type="strand" evidence="41">
    <location>
        <begin position="597"/>
        <end position="603"/>
    </location>
</feature>
<feature type="helix" evidence="41">
    <location>
        <begin position="604"/>
        <end position="606"/>
    </location>
</feature>
<feature type="strand" evidence="41">
    <location>
        <begin position="612"/>
        <end position="614"/>
    </location>
</feature>
<feature type="helix" evidence="41">
    <location>
        <begin position="619"/>
        <end position="621"/>
    </location>
</feature>
<feature type="strand" evidence="41">
    <location>
        <begin position="631"/>
        <end position="638"/>
    </location>
</feature>
<feature type="strand" evidence="41">
    <location>
        <begin position="645"/>
        <end position="650"/>
    </location>
</feature>
<feature type="strand" evidence="41">
    <location>
        <begin position="653"/>
        <end position="659"/>
    </location>
</feature>
<feature type="helix" evidence="41">
    <location>
        <begin position="660"/>
        <end position="663"/>
    </location>
</feature>
<feature type="strand" evidence="41">
    <location>
        <begin position="671"/>
        <end position="674"/>
    </location>
</feature>
<feature type="strand" evidence="41">
    <location>
        <begin position="682"/>
        <end position="688"/>
    </location>
</feature>
<feature type="strand" evidence="41">
    <location>
        <begin position="693"/>
        <end position="698"/>
    </location>
</feature>
<feature type="strand" evidence="41">
    <location>
        <begin position="701"/>
        <end position="707"/>
    </location>
</feature>
<feature type="helix" evidence="41">
    <location>
        <begin position="708"/>
        <end position="710"/>
    </location>
</feature>
<feature type="strand" evidence="41">
    <location>
        <begin position="732"/>
        <end position="736"/>
    </location>
</feature>
<feature type="strand" evidence="46">
    <location>
        <begin position="740"/>
        <end position="742"/>
    </location>
</feature>
<feature type="strand" evidence="41">
    <location>
        <begin position="743"/>
        <end position="748"/>
    </location>
</feature>
<feature type="strand" evidence="41">
    <location>
        <begin position="751"/>
        <end position="756"/>
    </location>
</feature>
<feature type="helix" evidence="41">
    <location>
        <begin position="758"/>
        <end position="760"/>
    </location>
</feature>
<feature type="strand" evidence="44">
    <location>
        <begin position="767"/>
        <end position="769"/>
    </location>
</feature>
<feature type="strand" evidence="41">
    <location>
        <begin position="771"/>
        <end position="774"/>
    </location>
</feature>
<feature type="turn" evidence="41">
    <location>
        <begin position="778"/>
        <end position="780"/>
    </location>
</feature>
<feature type="strand" evidence="41">
    <location>
        <begin position="782"/>
        <end position="789"/>
    </location>
</feature>
<feature type="strand" evidence="41">
    <location>
        <begin position="794"/>
        <end position="801"/>
    </location>
</feature>
<feature type="strand" evidence="41">
    <location>
        <begin position="804"/>
        <end position="808"/>
    </location>
</feature>
<feature type="helix" evidence="41">
    <location>
        <begin position="809"/>
        <end position="811"/>
    </location>
</feature>
<feature type="strand" evidence="41">
    <location>
        <begin position="833"/>
        <end position="838"/>
    </location>
</feature>